<sequence length="199" mass="22697">MKQSHFFAHLSRMKLINRWPLMRNVRTENVSEHSLQVAMVAHALAAIKNRKFGGQLNAERIALLAMYHDASEVLTGDLPTPVKYFNSQIAQEYKAIEKIAQQKLVDMAPDELRDIFAPLIDENAWSEEEQAIVKQADALCAYLKCLEELSAGNNEFGLAKTRLEKTLELRRSQEMDYFMAVFVPSFHLSLDEISQDSPL</sequence>
<protein>
    <recommendedName>
        <fullName evidence="1">5'-deoxynucleotidase YfbR</fullName>
        <ecNumber evidence="1">3.1.3.89</ecNumber>
    </recommendedName>
    <alternativeName>
        <fullName evidence="1">5'-deoxyribonucleotidase</fullName>
    </alternativeName>
    <alternativeName>
        <fullName evidence="1">Nucleoside 5'-monophosphate phosphohydrolase</fullName>
    </alternativeName>
</protein>
<accession>B4TBJ9</accession>
<name>5DNU_SALHS</name>
<dbReference type="EC" id="3.1.3.89" evidence="1"/>
<dbReference type="EMBL" id="CP001120">
    <property type="protein sequence ID" value="ACF69686.1"/>
    <property type="molecule type" value="Genomic_DNA"/>
</dbReference>
<dbReference type="RefSeq" id="WP_000813882.1">
    <property type="nucleotide sequence ID" value="NC_011083.1"/>
</dbReference>
<dbReference type="SMR" id="B4TBJ9"/>
<dbReference type="KEGG" id="seh:SeHA_C2572"/>
<dbReference type="HOGENOM" id="CLU_084784_0_0_6"/>
<dbReference type="Proteomes" id="UP000001866">
    <property type="component" value="Chromosome"/>
</dbReference>
<dbReference type="GO" id="GO:0005737">
    <property type="term" value="C:cytoplasm"/>
    <property type="evidence" value="ECO:0007669"/>
    <property type="project" value="UniProtKB-SubCell"/>
</dbReference>
<dbReference type="GO" id="GO:0002953">
    <property type="term" value="F:5'-deoxynucleotidase activity"/>
    <property type="evidence" value="ECO:0007669"/>
    <property type="project" value="UniProtKB-EC"/>
</dbReference>
<dbReference type="GO" id="GO:0046872">
    <property type="term" value="F:metal ion binding"/>
    <property type="evidence" value="ECO:0007669"/>
    <property type="project" value="UniProtKB-KW"/>
</dbReference>
<dbReference type="GO" id="GO:0000166">
    <property type="term" value="F:nucleotide binding"/>
    <property type="evidence" value="ECO:0007669"/>
    <property type="project" value="UniProtKB-KW"/>
</dbReference>
<dbReference type="FunFam" id="1.10.3210.10:FF:000002">
    <property type="entry name" value="Nucleotidase YfbR"/>
    <property type="match status" value="1"/>
</dbReference>
<dbReference type="Gene3D" id="1.10.3210.10">
    <property type="entry name" value="Hypothetical protein af1432"/>
    <property type="match status" value="1"/>
</dbReference>
<dbReference type="HAMAP" id="MF_01100">
    <property type="entry name" value="5DNU"/>
    <property type="match status" value="1"/>
</dbReference>
<dbReference type="InterPro" id="IPR003607">
    <property type="entry name" value="HD/PDEase_dom"/>
</dbReference>
<dbReference type="InterPro" id="IPR006674">
    <property type="entry name" value="HD_domain"/>
</dbReference>
<dbReference type="InterPro" id="IPR022971">
    <property type="entry name" value="YfbR"/>
</dbReference>
<dbReference type="InterPro" id="IPR039356">
    <property type="entry name" value="YfbR/HDDC2"/>
</dbReference>
<dbReference type="NCBIfam" id="NF003009">
    <property type="entry name" value="PRK03826.1"/>
    <property type="match status" value="1"/>
</dbReference>
<dbReference type="PANTHER" id="PTHR11845">
    <property type="entry name" value="5'-DEOXYNUCLEOTIDASE HDDC2"/>
    <property type="match status" value="1"/>
</dbReference>
<dbReference type="PANTHER" id="PTHR11845:SF13">
    <property type="entry name" value="5'-DEOXYNUCLEOTIDASE HDDC2"/>
    <property type="match status" value="1"/>
</dbReference>
<dbReference type="Pfam" id="PF12917">
    <property type="entry name" value="YfbR-like"/>
    <property type="match status" value="1"/>
</dbReference>
<dbReference type="SMART" id="SM00471">
    <property type="entry name" value="HDc"/>
    <property type="match status" value="1"/>
</dbReference>
<dbReference type="SUPFAM" id="SSF109604">
    <property type="entry name" value="HD-domain/PDEase-like"/>
    <property type="match status" value="1"/>
</dbReference>
<dbReference type="PROSITE" id="PS51831">
    <property type="entry name" value="HD"/>
    <property type="match status" value="1"/>
</dbReference>
<gene>
    <name evidence="1" type="primary">yfbR</name>
    <name type="ordered locus">SeHA_C2572</name>
</gene>
<keyword id="KW-0963">Cytoplasm</keyword>
<keyword id="KW-0378">Hydrolase</keyword>
<keyword id="KW-0479">Metal-binding</keyword>
<keyword id="KW-0547">Nucleotide-binding</keyword>
<feature type="chain" id="PRO_1000136975" description="5'-deoxynucleotidase YfbR">
    <location>
        <begin position="1"/>
        <end position="199"/>
    </location>
</feature>
<feature type="domain" description="HD" evidence="2">
    <location>
        <begin position="30"/>
        <end position="142"/>
    </location>
</feature>
<feature type="binding site" evidence="1">
    <location>
        <begin position="18"/>
        <end position="19"/>
    </location>
    <ligand>
        <name>substrate</name>
    </ligand>
</feature>
<feature type="binding site" evidence="1">
    <location>
        <position position="33"/>
    </location>
    <ligand>
        <name>a divalent metal cation</name>
        <dbReference type="ChEBI" id="CHEBI:60240"/>
    </ligand>
</feature>
<feature type="binding site" evidence="1">
    <location>
        <position position="33"/>
    </location>
    <ligand>
        <name>substrate</name>
    </ligand>
</feature>
<feature type="binding site" evidence="1">
    <location>
        <position position="68"/>
    </location>
    <ligand>
        <name>a divalent metal cation</name>
        <dbReference type="ChEBI" id="CHEBI:60240"/>
    </ligand>
</feature>
<feature type="binding site" evidence="1">
    <location>
        <position position="69"/>
    </location>
    <ligand>
        <name>a divalent metal cation</name>
        <dbReference type="ChEBI" id="CHEBI:60240"/>
    </ligand>
</feature>
<feature type="binding site" evidence="1">
    <location>
        <position position="69"/>
    </location>
    <ligand>
        <name>substrate</name>
    </ligand>
</feature>
<feature type="binding site" evidence="1">
    <location>
        <begin position="77"/>
        <end position="80"/>
    </location>
    <ligand>
        <name>substrate</name>
    </ligand>
</feature>
<feature type="binding site" evidence="1">
    <location>
        <position position="137"/>
    </location>
    <ligand>
        <name>a divalent metal cation</name>
        <dbReference type="ChEBI" id="CHEBI:60240"/>
    </ligand>
</feature>
<feature type="binding site" evidence="1">
    <location>
        <position position="137"/>
    </location>
    <ligand>
        <name>substrate</name>
    </ligand>
</feature>
<feature type="site" description="Appears to be important in orienting the phosphate for catalysis" evidence="1">
    <location>
        <position position="18"/>
    </location>
</feature>
<comment type="function">
    <text evidence="1">Catalyzes the strictly specific dephosphorylation of 2'-deoxyribonucleoside 5'-monophosphates.</text>
</comment>
<comment type="catalytic activity">
    <reaction evidence="1">
        <text>a 2'-deoxyribonucleoside 5'-phosphate + H2O = a 2'-deoxyribonucleoside + phosphate</text>
        <dbReference type="Rhea" id="RHEA:36167"/>
        <dbReference type="ChEBI" id="CHEBI:15377"/>
        <dbReference type="ChEBI" id="CHEBI:18274"/>
        <dbReference type="ChEBI" id="CHEBI:43474"/>
        <dbReference type="ChEBI" id="CHEBI:65317"/>
        <dbReference type="EC" id="3.1.3.89"/>
    </reaction>
</comment>
<comment type="cofactor">
    <cofactor evidence="1">
        <name>a divalent metal cation</name>
        <dbReference type="ChEBI" id="CHEBI:60240"/>
    </cofactor>
</comment>
<comment type="subunit">
    <text evidence="1">Homodimer.</text>
</comment>
<comment type="subcellular location">
    <subcellularLocation>
        <location evidence="1">Cytoplasm</location>
    </subcellularLocation>
</comment>
<comment type="similarity">
    <text evidence="1">Belongs to the 5DNU family.</text>
</comment>
<organism>
    <name type="scientific">Salmonella heidelberg (strain SL476)</name>
    <dbReference type="NCBI Taxonomy" id="454169"/>
    <lineage>
        <taxon>Bacteria</taxon>
        <taxon>Pseudomonadati</taxon>
        <taxon>Pseudomonadota</taxon>
        <taxon>Gammaproteobacteria</taxon>
        <taxon>Enterobacterales</taxon>
        <taxon>Enterobacteriaceae</taxon>
        <taxon>Salmonella</taxon>
    </lineage>
</organism>
<reference key="1">
    <citation type="journal article" date="2011" name="J. Bacteriol.">
        <title>Comparative genomics of 28 Salmonella enterica isolates: evidence for CRISPR-mediated adaptive sublineage evolution.</title>
        <authorList>
            <person name="Fricke W.F."/>
            <person name="Mammel M.K."/>
            <person name="McDermott P.F."/>
            <person name="Tartera C."/>
            <person name="White D.G."/>
            <person name="Leclerc J.E."/>
            <person name="Ravel J."/>
            <person name="Cebula T.A."/>
        </authorList>
    </citation>
    <scope>NUCLEOTIDE SEQUENCE [LARGE SCALE GENOMIC DNA]</scope>
    <source>
        <strain>SL476</strain>
    </source>
</reference>
<evidence type="ECO:0000255" key="1">
    <source>
        <dbReference type="HAMAP-Rule" id="MF_01100"/>
    </source>
</evidence>
<evidence type="ECO:0000255" key="2">
    <source>
        <dbReference type="PROSITE-ProRule" id="PRU01175"/>
    </source>
</evidence>
<proteinExistence type="inferred from homology"/>